<keyword id="KW-0106">Calcium</keyword>
<keyword id="KW-0233">DNA recombination</keyword>
<keyword id="KW-0460">Magnesium</keyword>
<keyword id="KW-0479">Metal-binding</keyword>
<keyword id="KW-0786">Thiamine pyrophosphate</keyword>
<keyword id="KW-0808">Transferase</keyword>
<comment type="function">
    <text evidence="1">Catalyzes the transfer of a two-carbon ketol group from a ketose donor to an aldose acceptor, via a covalent intermediate with the cofactor thiamine pyrophosphate.</text>
</comment>
<comment type="catalytic activity">
    <reaction>
        <text>D-sedoheptulose 7-phosphate + D-glyceraldehyde 3-phosphate = aldehydo-D-ribose 5-phosphate + D-xylulose 5-phosphate</text>
        <dbReference type="Rhea" id="RHEA:10508"/>
        <dbReference type="ChEBI" id="CHEBI:57483"/>
        <dbReference type="ChEBI" id="CHEBI:57737"/>
        <dbReference type="ChEBI" id="CHEBI:58273"/>
        <dbReference type="ChEBI" id="CHEBI:59776"/>
        <dbReference type="EC" id="2.2.1.1"/>
    </reaction>
</comment>
<comment type="cofactor">
    <cofactor evidence="1">
        <name>Mg(2+)</name>
        <dbReference type="ChEBI" id="CHEBI:18420"/>
    </cofactor>
    <cofactor evidence="1">
        <name>Ca(2+)</name>
        <dbReference type="ChEBI" id="CHEBI:29108"/>
    </cofactor>
    <cofactor evidence="1">
        <name>Mn(2+)</name>
        <dbReference type="ChEBI" id="CHEBI:29035"/>
    </cofactor>
    <cofactor evidence="1">
        <name>Co(2+)</name>
        <dbReference type="ChEBI" id="CHEBI:48828"/>
    </cofactor>
    <text evidence="1">Binds 1 Mg(2+) ion per subunit. Can also utilize other divalent metal cations, such as Ca(2+), Mn(2+) and Co(2+).</text>
</comment>
<comment type="cofactor">
    <cofactor evidence="1">
        <name>thiamine diphosphate</name>
        <dbReference type="ChEBI" id="CHEBI:58937"/>
    </cofactor>
    <text evidence="1">Binds 1 thiamine pyrophosphate per subunit.</text>
</comment>
<comment type="pathway">
    <text>Carbohydrate biosynthesis; Calvin cycle.</text>
</comment>
<comment type="pathway">
    <text>Carbohydrate degradation; pentose phosphate pathway.</text>
</comment>
<comment type="subunit">
    <text evidence="1">Homodimer.</text>
</comment>
<comment type="similarity">
    <text evidence="2">Belongs to the transketolase family.</text>
</comment>
<name>TKT_STAAW</name>
<protein>
    <recommendedName>
        <fullName>Transketolase</fullName>
        <shortName>TK</shortName>
        <ecNumber>2.2.1.1</ecNumber>
    </recommendedName>
</protein>
<evidence type="ECO:0000250" key="1"/>
<evidence type="ECO:0000305" key="2"/>
<dbReference type="EC" id="2.2.1.1"/>
<dbReference type="EMBL" id="BA000033">
    <property type="protein sequence ID" value="BAB95094.1"/>
    <property type="molecule type" value="Genomic_DNA"/>
</dbReference>
<dbReference type="RefSeq" id="WP_000481443.1">
    <property type="nucleotide sequence ID" value="NC_003923.1"/>
</dbReference>
<dbReference type="SMR" id="P66963"/>
<dbReference type="KEGG" id="sam:MW1229"/>
<dbReference type="HOGENOM" id="CLU_009227_0_0_9"/>
<dbReference type="UniPathway" id="UPA00115"/>
<dbReference type="UniPathway" id="UPA00116"/>
<dbReference type="GO" id="GO:0005829">
    <property type="term" value="C:cytosol"/>
    <property type="evidence" value="ECO:0007669"/>
    <property type="project" value="TreeGrafter"/>
</dbReference>
<dbReference type="GO" id="GO:0046872">
    <property type="term" value="F:metal ion binding"/>
    <property type="evidence" value="ECO:0007669"/>
    <property type="project" value="UniProtKB-KW"/>
</dbReference>
<dbReference type="GO" id="GO:0004802">
    <property type="term" value="F:transketolase activity"/>
    <property type="evidence" value="ECO:0007669"/>
    <property type="project" value="UniProtKB-EC"/>
</dbReference>
<dbReference type="GO" id="GO:0006310">
    <property type="term" value="P:DNA recombination"/>
    <property type="evidence" value="ECO:0007669"/>
    <property type="project" value="UniProtKB-KW"/>
</dbReference>
<dbReference type="GO" id="GO:0006098">
    <property type="term" value="P:pentose-phosphate shunt"/>
    <property type="evidence" value="ECO:0007669"/>
    <property type="project" value="UniProtKB-UniPathway"/>
</dbReference>
<dbReference type="GO" id="GO:0019253">
    <property type="term" value="P:reductive pentose-phosphate cycle"/>
    <property type="evidence" value="ECO:0007669"/>
    <property type="project" value="UniProtKB-UniPathway"/>
</dbReference>
<dbReference type="CDD" id="cd07033">
    <property type="entry name" value="TPP_PYR_DXS_TK_like"/>
    <property type="match status" value="1"/>
</dbReference>
<dbReference type="CDD" id="cd02012">
    <property type="entry name" value="TPP_TK"/>
    <property type="match status" value="1"/>
</dbReference>
<dbReference type="FunFam" id="3.40.50.920:FF:000003">
    <property type="entry name" value="Transketolase"/>
    <property type="match status" value="1"/>
</dbReference>
<dbReference type="FunFam" id="3.40.50.970:FF:000003">
    <property type="entry name" value="Transketolase"/>
    <property type="match status" value="1"/>
</dbReference>
<dbReference type="FunFam" id="3.40.50.970:FF:000081">
    <property type="entry name" value="Transketolase"/>
    <property type="match status" value="1"/>
</dbReference>
<dbReference type="Gene3D" id="3.40.50.920">
    <property type="match status" value="1"/>
</dbReference>
<dbReference type="Gene3D" id="3.40.50.970">
    <property type="match status" value="2"/>
</dbReference>
<dbReference type="InterPro" id="IPR029061">
    <property type="entry name" value="THDP-binding"/>
</dbReference>
<dbReference type="InterPro" id="IPR009014">
    <property type="entry name" value="Transketo_C/PFOR_II"/>
</dbReference>
<dbReference type="InterPro" id="IPR055152">
    <property type="entry name" value="Transketolase-like_C_2"/>
</dbReference>
<dbReference type="InterPro" id="IPR005475">
    <property type="entry name" value="Transketolase-like_Pyr-bd"/>
</dbReference>
<dbReference type="InterPro" id="IPR005478">
    <property type="entry name" value="Transketolase_bac-like"/>
</dbReference>
<dbReference type="InterPro" id="IPR020826">
    <property type="entry name" value="Transketolase_BS"/>
</dbReference>
<dbReference type="InterPro" id="IPR049557">
    <property type="entry name" value="Transketolase_CS"/>
</dbReference>
<dbReference type="InterPro" id="IPR033247">
    <property type="entry name" value="Transketolase_fam"/>
</dbReference>
<dbReference type="InterPro" id="IPR005474">
    <property type="entry name" value="Transketolase_N"/>
</dbReference>
<dbReference type="NCBIfam" id="TIGR00232">
    <property type="entry name" value="tktlase_bact"/>
    <property type="match status" value="1"/>
</dbReference>
<dbReference type="PANTHER" id="PTHR43522">
    <property type="entry name" value="TRANSKETOLASE"/>
    <property type="match status" value="1"/>
</dbReference>
<dbReference type="PANTHER" id="PTHR43522:SF2">
    <property type="entry name" value="TRANSKETOLASE 1-RELATED"/>
    <property type="match status" value="1"/>
</dbReference>
<dbReference type="Pfam" id="PF02779">
    <property type="entry name" value="Transket_pyr"/>
    <property type="match status" value="1"/>
</dbReference>
<dbReference type="Pfam" id="PF22613">
    <property type="entry name" value="Transketolase_C_1"/>
    <property type="match status" value="1"/>
</dbReference>
<dbReference type="Pfam" id="PF00456">
    <property type="entry name" value="Transketolase_N"/>
    <property type="match status" value="1"/>
</dbReference>
<dbReference type="SMART" id="SM00861">
    <property type="entry name" value="Transket_pyr"/>
    <property type="match status" value="1"/>
</dbReference>
<dbReference type="SUPFAM" id="SSF52518">
    <property type="entry name" value="Thiamin diphosphate-binding fold (THDP-binding)"/>
    <property type="match status" value="2"/>
</dbReference>
<dbReference type="SUPFAM" id="SSF52922">
    <property type="entry name" value="TK C-terminal domain-like"/>
    <property type="match status" value="1"/>
</dbReference>
<dbReference type="PROSITE" id="PS00801">
    <property type="entry name" value="TRANSKETOLASE_1"/>
    <property type="match status" value="1"/>
</dbReference>
<dbReference type="PROSITE" id="PS00802">
    <property type="entry name" value="TRANSKETOLASE_2"/>
    <property type="match status" value="1"/>
</dbReference>
<gene>
    <name type="primary">tkt</name>
    <name type="ordered locus">MW1229</name>
</gene>
<organism>
    <name type="scientific">Staphylococcus aureus (strain MW2)</name>
    <dbReference type="NCBI Taxonomy" id="196620"/>
    <lineage>
        <taxon>Bacteria</taxon>
        <taxon>Bacillati</taxon>
        <taxon>Bacillota</taxon>
        <taxon>Bacilli</taxon>
        <taxon>Bacillales</taxon>
        <taxon>Staphylococcaceae</taxon>
        <taxon>Staphylococcus</taxon>
    </lineage>
</organism>
<feature type="chain" id="PRO_0000191875" description="Transketolase">
    <location>
        <begin position="1"/>
        <end position="662"/>
    </location>
</feature>
<feature type="active site" description="Proton donor" evidence="1">
    <location>
        <position position="410"/>
    </location>
</feature>
<feature type="binding site" evidence="1">
    <location>
        <position position="28"/>
    </location>
    <ligand>
        <name>substrate</name>
    </ligand>
</feature>
<feature type="binding site" evidence="1">
    <location>
        <position position="68"/>
    </location>
    <ligand>
        <name>thiamine diphosphate</name>
        <dbReference type="ChEBI" id="CHEBI:58937"/>
    </ligand>
</feature>
<feature type="binding site" evidence="1">
    <location>
        <begin position="115"/>
        <end position="117"/>
    </location>
    <ligand>
        <name>thiamine diphosphate</name>
        <dbReference type="ChEBI" id="CHEBI:58937"/>
    </ligand>
</feature>
<feature type="binding site" evidence="1">
    <location>
        <position position="156"/>
    </location>
    <ligand>
        <name>Mg(2+)</name>
        <dbReference type="ChEBI" id="CHEBI:18420"/>
    </ligand>
</feature>
<feature type="binding site" evidence="1">
    <location>
        <position position="157"/>
    </location>
    <ligand>
        <name>thiamine diphosphate</name>
        <dbReference type="ChEBI" id="CHEBI:58937"/>
    </ligand>
</feature>
<feature type="binding site" evidence="1">
    <location>
        <position position="186"/>
    </location>
    <ligand>
        <name>Mg(2+)</name>
        <dbReference type="ChEBI" id="CHEBI:18420"/>
    </ligand>
</feature>
<feature type="binding site" evidence="1">
    <location>
        <position position="186"/>
    </location>
    <ligand>
        <name>thiamine diphosphate</name>
        <dbReference type="ChEBI" id="CHEBI:58937"/>
    </ligand>
</feature>
<feature type="binding site" evidence="1">
    <location>
        <position position="188"/>
    </location>
    <ligand>
        <name>Mg(2+)</name>
        <dbReference type="ChEBI" id="CHEBI:18420"/>
    </ligand>
</feature>
<feature type="binding site" evidence="1">
    <location>
        <position position="261"/>
    </location>
    <ligand>
        <name>substrate</name>
    </ligand>
</feature>
<feature type="binding site" evidence="1">
    <location>
        <position position="261"/>
    </location>
    <ligand>
        <name>thiamine diphosphate</name>
        <dbReference type="ChEBI" id="CHEBI:58937"/>
    </ligand>
</feature>
<feature type="binding site" evidence="1">
    <location>
        <position position="356"/>
    </location>
    <ligand>
        <name>substrate</name>
    </ligand>
</feature>
<feature type="binding site" evidence="1">
    <location>
        <position position="383"/>
    </location>
    <ligand>
        <name>substrate</name>
    </ligand>
</feature>
<feature type="binding site" evidence="1">
    <location>
        <position position="436"/>
    </location>
    <ligand>
        <name>thiamine diphosphate</name>
        <dbReference type="ChEBI" id="CHEBI:58937"/>
    </ligand>
</feature>
<feature type="binding site" evidence="1">
    <location>
        <position position="460"/>
    </location>
    <ligand>
        <name>substrate</name>
    </ligand>
</feature>
<feature type="binding site" evidence="1">
    <location>
        <position position="468"/>
    </location>
    <ligand>
        <name>substrate</name>
    </ligand>
</feature>
<feature type="binding site" evidence="1">
    <location>
        <position position="519"/>
    </location>
    <ligand>
        <name>substrate</name>
    </ligand>
</feature>
<feature type="site" description="Important for catalytic activity" evidence="1">
    <location>
        <position position="28"/>
    </location>
</feature>
<feature type="site" description="Important for catalytic activity" evidence="1">
    <location>
        <position position="261"/>
    </location>
</feature>
<reference key="1">
    <citation type="journal article" date="2002" name="Lancet">
        <title>Genome and virulence determinants of high virulence community-acquired MRSA.</title>
        <authorList>
            <person name="Baba T."/>
            <person name="Takeuchi F."/>
            <person name="Kuroda M."/>
            <person name="Yuzawa H."/>
            <person name="Aoki K."/>
            <person name="Oguchi A."/>
            <person name="Nagai Y."/>
            <person name="Iwama N."/>
            <person name="Asano K."/>
            <person name="Naimi T."/>
            <person name="Kuroda H."/>
            <person name="Cui L."/>
            <person name="Yamamoto K."/>
            <person name="Hiramatsu K."/>
        </authorList>
    </citation>
    <scope>NUCLEOTIDE SEQUENCE [LARGE SCALE GENOMIC DNA]</scope>
    <source>
        <strain>MW2</strain>
    </source>
</reference>
<proteinExistence type="inferred from homology"/>
<sequence length="662" mass="72251">MFNEKDQLAVDTLRALSIDTIEKANSGHPGLPMGAAPMAYTLWTRHLNFNPQSKDYFNRDRFVLSAGHGSALLYSLLHVSGSLELEELKQFRQWGSKTPGHPEYRHTDGVEVTTGPLGQGFAMSVGLALAEDHLAGKFNKEGYNVVDHYTYVLASDGDLMEGISHEAASFAGHNKLSKLVVLYDSNDISLDGELNKAFSENTKARFEAYGWNYLLVKDGNDLEEIDKAITTAKSQEGPTIIEVKTTIGFGSPNKAGTNGVHGAPLGEVERKLTFENYGLDPEKRFNVSEEVYEIFQNTMLKRANEDESQWNSLLEKYAETYPELAEEFKLAISGKLPKNYKDELPRFELGHNGASRADSGTVIQAISKTVPSFFGGSADLAGSNKSNVNDATDYSSETPEGKNVWFGVREFAMGAAVNGMAAHGGLHPYGATFFVFSDYLKPALRLSSIMGLNATFIFTHDSIAVGEDGPTHEPIEQLAGLRAIPNMNVIRPADGNETRVAWEVALESESTPTSLVLTRQNLPVLDVPEDVVEEGVRKGAYTVYGSEETPEFLLLASGSEVSLAVEAAKDLEKQGKSVRVVSMPNWNAFEQQSEEYKESVIPSSVTKRVAIEMASPLGWHKYVGTAGKVIAIDGFGASAPGDLVVEKYGFTKENILNQVMSL</sequence>
<accession>P66963</accession>
<accession>Q99UD4</accession>